<proteinExistence type="inferred from homology"/>
<accession>C3MJA6</accession>
<gene>
    <name type="ordered locus">LS215_0030</name>
</gene>
<comment type="similarity">
    <text evidence="1">Belongs to the UPF0284 family.</text>
</comment>
<sequence>MIKEYYGAETFILNKDFAYILVIGTTDVSLIPGLTIAGATPELTHFTPAADAEYVLLGKCKSINTIPVSPTGIPTPALLTRASLSFINPLKIVVNAGSRILPKIPYIDLQGEPGKDIRKQALSMEKVNNIIENSIKLGEELSNEYELIMIGESIPAGTTTAMATLLALGYDAMDKVSSASPDNPKELKRKVVEEALRNLPTDSLQRLAKVSDPVLLGVAGTSLGFKGKILLAGGTQMTAAAAIINEFDKNKLKDITIGTTKWIVEDKFADMLSLAKQVGVKVLASMLDLSISAYEGIRAYEKGYVKEGVGAGGSAIMALVRGVSNNTLVRKIDELYGELVGSNNLHI</sequence>
<dbReference type="EMBL" id="CP001399">
    <property type="protein sequence ID" value="ACP34184.1"/>
    <property type="molecule type" value="Genomic_DNA"/>
</dbReference>
<dbReference type="RefSeq" id="WP_012712716.1">
    <property type="nucleotide sequence ID" value="NC_012589.1"/>
</dbReference>
<dbReference type="SMR" id="C3MJA6"/>
<dbReference type="GeneID" id="7805927"/>
<dbReference type="KEGG" id="sis:LS215_0030"/>
<dbReference type="HOGENOM" id="CLU_053134_0_0_2"/>
<dbReference type="OrthoDB" id="9136at2157"/>
<dbReference type="Proteomes" id="UP000001747">
    <property type="component" value="Chromosome"/>
</dbReference>
<dbReference type="GO" id="GO:0008939">
    <property type="term" value="F:nicotinate-nucleotide-dimethylbenzimidazole phosphoribosyltransferase activity"/>
    <property type="evidence" value="ECO:0007669"/>
    <property type="project" value="InterPro"/>
</dbReference>
<dbReference type="CDD" id="cd02439">
    <property type="entry name" value="DMB-PRT_CobT"/>
    <property type="match status" value="1"/>
</dbReference>
<dbReference type="Gene3D" id="3.40.50.10210">
    <property type="match status" value="1"/>
</dbReference>
<dbReference type="HAMAP" id="MF_01086">
    <property type="entry name" value="UPF0284"/>
    <property type="match status" value="1"/>
</dbReference>
<dbReference type="InterPro" id="IPR003200">
    <property type="entry name" value="Nict_dMeBzImd_PRibTrfase"/>
</dbReference>
<dbReference type="InterPro" id="IPR002805">
    <property type="entry name" value="Nict_dMeBzImd_PRibTrfase_arc"/>
</dbReference>
<dbReference type="InterPro" id="IPR036087">
    <property type="entry name" value="Nict_dMeBzImd_PRibTrfase_sf"/>
</dbReference>
<dbReference type="NCBIfam" id="TIGR00303">
    <property type="entry name" value="nicotinate mononucleotide-dependent phosphoribosyltransferase CobT"/>
    <property type="match status" value="1"/>
</dbReference>
<dbReference type="NCBIfam" id="NF003368">
    <property type="entry name" value="PRK04447.1-1"/>
    <property type="match status" value="1"/>
</dbReference>
<dbReference type="NCBIfam" id="NF003370">
    <property type="entry name" value="PRK04447.1-3"/>
    <property type="match status" value="1"/>
</dbReference>
<dbReference type="NCBIfam" id="NF003372">
    <property type="entry name" value="PRK04447.1-5"/>
    <property type="match status" value="1"/>
</dbReference>
<dbReference type="PANTHER" id="PTHR38811">
    <property type="match status" value="1"/>
</dbReference>
<dbReference type="PANTHER" id="PTHR38811:SF1">
    <property type="entry name" value="UPF0284 PROTEIN SLL1500"/>
    <property type="match status" value="1"/>
</dbReference>
<dbReference type="Pfam" id="PF02277">
    <property type="entry name" value="DBI_PRT"/>
    <property type="match status" value="1"/>
</dbReference>
<dbReference type="SUPFAM" id="SSF52733">
    <property type="entry name" value="Nicotinate mononucleotide:5,6-dimethylbenzimidazole phosphoribosyltransferase (CobT)"/>
    <property type="match status" value="1"/>
</dbReference>
<organism>
    <name type="scientific">Saccharolobus islandicus (strain L.S.2.15 / Lassen #1)</name>
    <name type="common">Sulfolobus islandicus</name>
    <dbReference type="NCBI Taxonomy" id="429572"/>
    <lineage>
        <taxon>Archaea</taxon>
        <taxon>Thermoproteota</taxon>
        <taxon>Thermoprotei</taxon>
        <taxon>Sulfolobales</taxon>
        <taxon>Sulfolobaceae</taxon>
        <taxon>Saccharolobus</taxon>
    </lineage>
</organism>
<feature type="chain" id="PRO_1000213531" description="UPF0284 protein LS215_0030">
    <location>
        <begin position="1"/>
        <end position="347"/>
    </location>
</feature>
<reference key="1">
    <citation type="journal article" date="2009" name="Proc. Natl. Acad. Sci. U.S.A.">
        <title>Biogeography of the Sulfolobus islandicus pan-genome.</title>
        <authorList>
            <person name="Reno M.L."/>
            <person name="Held N.L."/>
            <person name="Fields C.J."/>
            <person name="Burke P.V."/>
            <person name="Whitaker R.J."/>
        </authorList>
    </citation>
    <scope>NUCLEOTIDE SEQUENCE [LARGE SCALE GENOMIC DNA]</scope>
    <source>
        <strain>L.S.2.15 / Lassen #1</strain>
    </source>
</reference>
<evidence type="ECO:0000255" key="1">
    <source>
        <dbReference type="HAMAP-Rule" id="MF_01086"/>
    </source>
</evidence>
<name>Y030_SACI2</name>
<protein>
    <recommendedName>
        <fullName evidence="1">UPF0284 protein LS215_0030</fullName>
    </recommendedName>
</protein>